<reference key="1">
    <citation type="submission" date="2002-12" db="EMBL/GenBank/DDBJ databases">
        <title>Complete genome sequence of Vibrio vulnificus CMCP6.</title>
        <authorList>
            <person name="Rhee J.H."/>
            <person name="Kim S.Y."/>
            <person name="Chung S.S."/>
            <person name="Kim J.J."/>
            <person name="Moon Y.H."/>
            <person name="Jeong H."/>
            <person name="Choy H.E."/>
        </authorList>
    </citation>
    <scope>NUCLEOTIDE SEQUENCE [LARGE SCALE GENOMIC DNA]</scope>
    <source>
        <strain>CMCP6</strain>
    </source>
</reference>
<evidence type="ECO:0000255" key="1">
    <source>
        <dbReference type="HAMAP-Rule" id="MF_01019"/>
    </source>
</evidence>
<accession>Q8D8Q6</accession>
<keyword id="KW-0028">Amino-acid biosynthesis</keyword>
<keyword id="KW-0067">ATP-binding</keyword>
<keyword id="KW-0963">Cytoplasm</keyword>
<keyword id="KW-0368">Histidine biosynthesis</keyword>
<keyword id="KW-0378">Hydrolase</keyword>
<keyword id="KW-0511">Multifunctional enzyme</keyword>
<keyword id="KW-0547">Nucleotide-binding</keyword>
<proteinExistence type="inferred from homology"/>
<name>HIS2_VIBVU</name>
<organism>
    <name type="scientific">Vibrio vulnificus (strain CMCP6)</name>
    <dbReference type="NCBI Taxonomy" id="216895"/>
    <lineage>
        <taxon>Bacteria</taxon>
        <taxon>Pseudomonadati</taxon>
        <taxon>Pseudomonadota</taxon>
        <taxon>Gammaproteobacteria</taxon>
        <taxon>Vibrionales</taxon>
        <taxon>Vibrionaceae</taxon>
        <taxon>Vibrio</taxon>
    </lineage>
</organism>
<feature type="chain" id="PRO_0000136447" description="Histidine biosynthesis bifunctional protein HisIE">
    <location>
        <begin position="1"/>
        <end position="211"/>
    </location>
</feature>
<feature type="region of interest" description="Phosphoribosyl-AMP cyclohydrolase">
    <location>
        <begin position="1"/>
        <end position="122"/>
    </location>
</feature>
<feature type="region of interest" description="Phosphoribosyl-ATP pyrophosphohydrolase">
    <location>
        <begin position="123"/>
        <end position="211"/>
    </location>
</feature>
<protein>
    <recommendedName>
        <fullName evidence="1">Histidine biosynthesis bifunctional protein HisIE</fullName>
    </recommendedName>
    <domain>
        <recommendedName>
            <fullName evidence="1">Phosphoribosyl-AMP cyclohydrolase</fullName>
            <shortName evidence="1">PRA-CH</shortName>
            <ecNumber evidence="1">3.5.4.19</ecNumber>
        </recommendedName>
    </domain>
    <domain>
        <recommendedName>
            <fullName evidence="1">Phosphoribosyl-ATP pyrophosphatase</fullName>
            <shortName evidence="1">PRA-PH</shortName>
            <ecNumber evidence="1">3.6.1.31</ecNumber>
        </recommendedName>
    </domain>
</protein>
<sequence length="211" mass="23282">MSFKTAEVSSLAERINWEKVDGLVPAIVQDFQSSQVLMMGYMNQEALVKTGETGQVTFFSRTKERLWTKGETSGNVLQLVNMSLDCDNDTLLVKVNPIGPTCHTGTTTCWDGDPQEESQMVWLHQLEQLLAARKSAGPDSSYTASLYARGTKRISQKVGEEGVEVALAATSGDKAELVCESADLIYHLLVLLQDQGLSMNDVINKLKERHK</sequence>
<comment type="catalytic activity">
    <reaction evidence="1">
        <text>1-(5-phospho-beta-D-ribosyl)-ATP + H2O = 1-(5-phospho-beta-D-ribosyl)-5'-AMP + diphosphate + H(+)</text>
        <dbReference type="Rhea" id="RHEA:22828"/>
        <dbReference type="ChEBI" id="CHEBI:15377"/>
        <dbReference type="ChEBI" id="CHEBI:15378"/>
        <dbReference type="ChEBI" id="CHEBI:33019"/>
        <dbReference type="ChEBI" id="CHEBI:59457"/>
        <dbReference type="ChEBI" id="CHEBI:73183"/>
        <dbReference type="EC" id="3.6.1.31"/>
    </reaction>
</comment>
<comment type="catalytic activity">
    <reaction evidence="1">
        <text>1-(5-phospho-beta-D-ribosyl)-5'-AMP + H2O = 1-(5-phospho-beta-D-ribosyl)-5-[(5-phospho-beta-D-ribosylamino)methylideneamino]imidazole-4-carboxamide</text>
        <dbReference type="Rhea" id="RHEA:20049"/>
        <dbReference type="ChEBI" id="CHEBI:15377"/>
        <dbReference type="ChEBI" id="CHEBI:58435"/>
        <dbReference type="ChEBI" id="CHEBI:59457"/>
        <dbReference type="EC" id="3.5.4.19"/>
    </reaction>
</comment>
<comment type="pathway">
    <text evidence="1">Amino-acid biosynthesis; L-histidine biosynthesis; L-histidine from 5-phospho-alpha-D-ribose 1-diphosphate: step 2/9.</text>
</comment>
<comment type="pathway">
    <text evidence="1">Amino-acid biosynthesis; L-histidine biosynthesis; L-histidine from 5-phospho-alpha-D-ribose 1-diphosphate: step 3/9.</text>
</comment>
<comment type="subcellular location">
    <subcellularLocation>
        <location evidence="1">Cytoplasm</location>
    </subcellularLocation>
</comment>
<comment type="similarity">
    <text evidence="1">In the N-terminal section; belongs to the PRA-CH family.</text>
</comment>
<comment type="similarity">
    <text evidence="1">In the C-terminal section; belongs to the PRA-PH family.</text>
</comment>
<gene>
    <name evidence="1" type="primary">hisI</name>
    <name evidence="1" type="synonym">hisIE</name>
    <name type="ordered locus">VV1_2913</name>
</gene>
<dbReference type="EC" id="3.5.4.19" evidence="1"/>
<dbReference type="EC" id="3.6.1.31" evidence="1"/>
<dbReference type="EMBL" id="AE016795">
    <property type="protein sequence ID" value="AAO11246.1"/>
    <property type="molecule type" value="Genomic_DNA"/>
</dbReference>
<dbReference type="RefSeq" id="WP_011080733.1">
    <property type="nucleotide sequence ID" value="NC_004459.3"/>
</dbReference>
<dbReference type="SMR" id="Q8D8Q6"/>
<dbReference type="KEGG" id="vvu:VV1_2913"/>
<dbReference type="HOGENOM" id="CLU_048577_3_1_6"/>
<dbReference type="UniPathway" id="UPA00031">
    <property type="reaction ID" value="UER00007"/>
</dbReference>
<dbReference type="UniPathway" id="UPA00031">
    <property type="reaction ID" value="UER00008"/>
</dbReference>
<dbReference type="Proteomes" id="UP000002275">
    <property type="component" value="Chromosome 1"/>
</dbReference>
<dbReference type="GO" id="GO:0005737">
    <property type="term" value="C:cytoplasm"/>
    <property type="evidence" value="ECO:0007669"/>
    <property type="project" value="UniProtKB-SubCell"/>
</dbReference>
<dbReference type="GO" id="GO:0005524">
    <property type="term" value="F:ATP binding"/>
    <property type="evidence" value="ECO:0007669"/>
    <property type="project" value="UniProtKB-KW"/>
</dbReference>
<dbReference type="GO" id="GO:0004635">
    <property type="term" value="F:phosphoribosyl-AMP cyclohydrolase activity"/>
    <property type="evidence" value="ECO:0007669"/>
    <property type="project" value="UniProtKB-UniRule"/>
</dbReference>
<dbReference type="GO" id="GO:0004636">
    <property type="term" value="F:phosphoribosyl-ATP diphosphatase activity"/>
    <property type="evidence" value="ECO:0007669"/>
    <property type="project" value="UniProtKB-UniRule"/>
</dbReference>
<dbReference type="GO" id="GO:0000105">
    <property type="term" value="P:L-histidine biosynthetic process"/>
    <property type="evidence" value="ECO:0007669"/>
    <property type="project" value="UniProtKB-UniRule"/>
</dbReference>
<dbReference type="CDD" id="cd11534">
    <property type="entry name" value="NTP-PPase_HisIE_like"/>
    <property type="match status" value="1"/>
</dbReference>
<dbReference type="FunFam" id="1.10.287.1080:FF:000002">
    <property type="entry name" value="Histidine biosynthesis bifunctional protein HisIE"/>
    <property type="match status" value="1"/>
</dbReference>
<dbReference type="FunFam" id="3.10.20.810:FF:000001">
    <property type="entry name" value="Histidine biosynthesis bifunctional protein HisIE"/>
    <property type="match status" value="1"/>
</dbReference>
<dbReference type="Gene3D" id="1.10.287.1080">
    <property type="entry name" value="MazG-like"/>
    <property type="match status" value="1"/>
</dbReference>
<dbReference type="Gene3D" id="3.10.20.810">
    <property type="entry name" value="Phosphoribosyl-AMP cyclohydrolase"/>
    <property type="match status" value="1"/>
</dbReference>
<dbReference type="HAMAP" id="MF_01020">
    <property type="entry name" value="HisE"/>
    <property type="match status" value="1"/>
</dbReference>
<dbReference type="HAMAP" id="MF_01019">
    <property type="entry name" value="HisIE"/>
    <property type="match status" value="1"/>
</dbReference>
<dbReference type="InterPro" id="IPR023019">
    <property type="entry name" value="His_synth_HisIE"/>
</dbReference>
<dbReference type="InterPro" id="IPR008179">
    <property type="entry name" value="HisE"/>
</dbReference>
<dbReference type="InterPro" id="IPR021130">
    <property type="entry name" value="PRib-ATP_PPHydrolase-like"/>
</dbReference>
<dbReference type="InterPro" id="IPR002496">
    <property type="entry name" value="PRib_AMP_CycHydrolase_dom"/>
</dbReference>
<dbReference type="InterPro" id="IPR038019">
    <property type="entry name" value="PRib_AMP_CycHydrolase_sf"/>
</dbReference>
<dbReference type="NCBIfam" id="TIGR03188">
    <property type="entry name" value="histidine_hisI"/>
    <property type="match status" value="1"/>
</dbReference>
<dbReference type="NCBIfam" id="NF000768">
    <property type="entry name" value="PRK00051.1"/>
    <property type="match status" value="1"/>
</dbReference>
<dbReference type="NCBIfam" id="NF002747">
    <property type="entry name" value="PRK02759.1"/>
    <property type="match status" value="1"/>
</dbReference>
<dbReference type="PANTHER" id="PTHR42945">
    <property type="entry name" value="HISTIDINE BIOSYNTHESIS BIFUNCTIONAL PROTEIN"/>
    <property type="match status" value="1"/>
</dbReference>
<dbReference type="PANTHER" id="PTHR42945:SF9">
    <property type="entry name" value="HISTIDINE BIOSYNTHESIS BIFUNCTIONAL PROTEIN HISIE"/>
    <property type="match status" value="1"/>
</dbReference>
<dbReference type="Pfam" id="PF01502">
    <property type="entry name" value="PRA-CH"/>
    <property type="match status" value="1"/>
</dbReference>
<dbReference type="Pfam" id="PF01503">
    <property type="entry name" value="PRA-PH"/>
    <property type="match status" value="1"/>
</dbReference>
<dbReference type="SUPFAM" id="SSF101386">
    <property type="entry name" value="all-alpha NTP pyrophosphatases"/>
    <property type="match status" value="1"/>
</dbReference>
<dbReference type="SUPFAM" id="SSF141734">
    <property type="entry name" value="HisI-like"/>
    <property type="match status" value="1"/>
</dbReference>